<gene>
    <name evidence="1" type="primary">apeB</name>
    <name type="ordered locus">PSPA7_1878</name>
</gene>
<keyword id="KW-0031">Aminopeptidase</keyword>
<keyword id="KW-0378">Hydrolase</keyword>
<keyword id="KW-0479">Metal-binding</keyword>
<keyword id="KW-0482">Metalloprotease</keyword>
<keyword id="KW-0645">Protease</keyword>
<keyword id="KW-0862">Zinc</keyword>
<comment type="cofactor">
    <cofactor evidence="1">
        <name>Zn(2+)</name>
        <dbReference type="ChEBI" id="CHEBI:29105"/>
    </cofactor>
</comment>
<comment type="similarity">
    <text evidence="1">Belongs to the peptidase M18 family.</text>
</comment>
<name>APEB_PSEP7</name>
<protein>
    <recommendedName>
        <fullName evidence="1">Probable M18 family aminopeptidase 2</fullName>
        <ecNumber evidence="1">3.4.11.-</ecNumber>
    </recommendedName>
</protein>
<organism>
    <name type="scientific">Pseudomonas paraeruginosa (strain DSM 24068 / PA7)</name>
    <name type="common">Pseudomonas aeruginosa (strain PA7)</name>
    <dbReference type="NCBI Taxonomy" id="381754"/>
    <lineage>
        <taxon>Bacteria</taxon>
        <taxon>Pseudomonadati</taxon>
        <taxon>Pseudomonadota</taxon>
        <taxon>Gammaproteobacteria</taxon>
        <taxon>Pseudomonadales</taxon>
        <taxon>Pseudomonadaceae</taxon>
        <taxon>Pseudomonas</taxon>
        <taxon>Pseudomonas paraeruginosa</taxon>
    </lineage>
</organism>
<dbReference type="EC" id="3.4.11.-" evidence="1"/>
<dbReference type="EMBL" id="CP000744">
    <property type="protein sequence ID" value="ABR81680.1"/>
    <property type="molecule type" value="Genomic_DNA"/>
</dbReference>
<dbReference type="RefSeq" id="WP_003150358.1">
    <property type="nucleotide sequence ID" value="NC_009656.1"/>
</dbReference>
<dbReference type="SMR" id="A6V2H4"/>
<dbReference type="GeneID" id="77220232"/>
<dbReference type="KEGG" id="pap:PSPA7_1878"/>
<dbReference type="HOGENOM" id="CLU_019532_2_0_6"/>
<dbReference type="Proteomes" id="UP000001582">
    <property type="component" value="Chromosome"/>
</dbReference>
<dbReference type="GO" id="GO:0005737">
    <property type="term" value="C:cytoplasm"/>
    <property type="evidence" value="ECO:0007669"/>
    <property type="project" value="UniProtKB-ARBA"/>
</dbReference>
<dbReference type="GO" id="GO:0004177">
    <property type="term" value="F:aminopeptidase activity"/>
    <property type="evidence" value="ECO:0007669"/>
    <property type="project" value="UniProtKB-UniRule"/>
</dbReference>
<dbReference type="GO" id="GO:0008237">
    <property type="term" value="F:metallopeptidase activity"/>
    <property type="evidence" value="ECO:0007669"/>
    <property type="project" value="UniProtKB-UniRule"/>
</dbReference>
<dbReference type="GO" id="GO:0008270">
    <property type="term" value="F:zinc ion binding"/>
    <property type="evidence" value="ECO:0007669"/>
    <property type="project" value="UniProtKB-UniRule"/>
</dbReference>
<dbReference type="GO" id="GO:0006508">
    <property type="term" value="P:proteolysis"/>
    <property type="evidence" value="ECO:0007669"/>
    <property type="project" value="UniProtKB-UniRule"/>
</dbReference>
<dbReference type="CDD" id="cd05639">
    <property type="entry name" value="M18"/>
    <property type="match status" value="1"/>
</dbReference>
<dbReference type="FunFam" id="2.30.250.10:FF:000003">
    <property type="entry name" value="Probable M18 family aminopeptidase 2"/>
    <property type="match status" value="1"/>
</dbReference>
<dbReference type="Gene3D" id="2.30.250.10">
    <property type="entry name" value="Aminopeptidase i, Domain 2"/>
    <property type="match status" value="1"/>
</dbReference>
<dbReference type="Gene3D" id="3.40.630.10">
    <property type="entry name" value="Zn peptidases"/>
    <property type="match status" value="1"/>
</dbReference>
<dbReference type="HAMAP" id="MF_00467">
    <property type="entry name" value="Aminopeptidase_M18_2"/>
    <property type="match status" value="1"/>
</dbReference>
<dbReference type="InterPro" id="IPR022984">
    <property type="entry name" value="M18_aminopeptidase_2"/>
</dbReference>
<dbReference type="InterPro" id="IPR001948">
    <property type="entry name" value="Peptidase_M18"/>
</dbReference>
<dbReference type="InterPro" id="IPR023358">
    <property type="entry name" value="Peptidase_M18_dom2"/>
</dbReference>
<dbReference type="NCBIfam" id="NF002759">
    <property type="entry name" value="PRK02813.1"/>
    <property type="match status" value="1"/>
</dbReference>
<dbReference type="PANTHER" id="PTHR28570">
    <property type="entry name" value="ASPARTYL AMINOPEPTIDASE"/>
    <property type="match status" value="1"/>
</dbReference>
<dbReference type="PANTHER" id="PTHR28570:SF3">
    <property type="entry name" value="ASPARTYL AMINOPEPTIDASE"/>
    <property type="match status" value="1"/>
</dbReference>
<dbReference type="Pfam" id="PF02127">
    <property type="entry name" value="Peptidase_M18"/>
    <property type="match status" value="1"/>
</dbReference>
<dbReference type="PRINTS" id="PR00932">
    <property type="entry name" value="AMINO1PTASE"/>
</dbReference>
<dbReference type="SUPFAM" id="SSF101821">
    <property type="entry name" value="Aminopeptidase/glucanase lid domain"/>
    <property type="match status" value="1"/>
</dbReference>
<dbReference type="SUPFAM" id="SSF53187">
    <property type="entry name" value="Zn-dependent exopeptidases"/>
    <property type="match status" value="1"/>
</dbReference>
<accession>A6V2H4</accession>
<proteinExistence type="inferred from homology"/>
<feature type="chain" id="PRO_1000013701" description="Probable M18 family aminopeptidase 2">
    <location>
        <begin position="1"/>
        <end position="429"/>
    </location>
</feature>
<feature type="binding site" evidence="1">
    <location>
        <position position="82"/>
    </location>
    <ligand>
        <name>Zn(2+)</name>
        <dbReference type="ChEBI" id="CHEBI:29105"/>
    </ligand>
</feature>
<feature type="binding site" evidence="1">
    <location>
        <position position="156"/>
    </location>
    <ligand>
        <name>Zn(2+)</name>
        <dbReference type="ChEBI" id="CHEBI:29105"/>
    </ligand>
</feature>
<feature type="binding site" evidence="1">
    <location>
        <position position="401"/>
    </location>
    <ligand>
        <name>Zn(2+)</name>
        <dbReference type="ChEBI" id="CHEBI:29105"/>
    </ligand>
</feature>
<reference key="1">
    <citation type="submission" date="2007-06" db="EMBL/GenBank/DDBJ databases">
        <authorList>
            <person name="Dodson R.J."/>
            <person name="Harkins D."/>
            <person name="Paulsen I.T."/>
        </authorList>
    </citation>
    <scope>NUCLEOTIDE SEQUENCE [LARGE SCALE GENOMIC DNA]</scope>
    <source>
        <strain>DSM 24068 / PA7</strain>
    </source>
</reference>
<sequence length="429" mass="46643">MRAELNQGLIDFLKASPTPFHATASLARRLEAAGYRRLDERDAWHTEAGGRYYVTRNDSSLIAIRLGRRSPLESGFRLVGAHTDSPCLRVKPNPEIARNGFLQLGVEVYGGALFAPWFDRDLSLAGRVTFRANGKLESRLVDFRKAIAVIPNLAIHLNRAANEGWPINAQNELPPIIAQLAPGEAADFRLLLDEQLLREHGITADVVLDYELSFYDTQSAAVIGLNDEFIAGARLDNLLSCHAGLEALLNAEGDENCILVCTDHEEVGSCSHCGADGPFLEQVLRRLLPEGDAFSRAIQRSLLVSADNAHGVHPNYADRHDANHGPALNGGPVIKINSNQRYATNSETAGFFRHLCQDSEVPVQSFVTRSDMGCGSTIGPITASQVGVRTVDIGLPTFAMHSIRELAGSHDLAHLVKVLGAFYASSELP</sequence>
<evidence type="ECO:0000255" key="1">
    <source>
        <dbReference type="HAMAP-Rule" id="MF_00467"/>
    </source>
</evidence>